<name>TSAD_ACIBC</name>
<comment type="function">
    <text evidence="1">Required for the formation of a threonylcarbamoyl group on adenosine at position 37 (t(6)A37) in tRNAs that read codons beginning with adenine. Is involved in the transfer of the threonylcarbamoyl moiety of threonylcarbamoyl-AMP (TC-AMP) to the N6 group of A37, together with TsaE and TsaB. TsaD likely plays a direct catalytic role in this reaction.</text>
</comment>
<comment type="catalytic activity">
    <reaction evidence="1">
        <text>L-threonylcarbamoyladenylate + adenosine(37) in tRNA = N(6)-L-threonylcarbamoyladenosine(37) in tRNA + AMP + H(+)</text>
        <dbReference type="Rhea" id="RHEA:37059"/>
        <dbReference type="Rhea" id="RHEA-COMP:10162"/>
        <dbReference type="Rhea" id="RHEA-COMP:10163"/>
        <dbReference type="ChEBI" id="CHEBI:15378"/>
        <dbReference type="ChEBI" id="CHEBI:73682"/>
        <dbReference type="ChEBI" id="CHEBI:74411"/>
        <dbReference type="ChEBI" id="CHEBI:74418"/>
        <dbReference type="ChEBI" id="CHEBI:456215"/>
        <dbReference type="EC" id="2.3.1.234"/>
    </reaction>
</comment>
<comment type="cofactor">
    <cofactor evidence="1">
        <name>Fe(2+)</name>
        <dbReference type="ChEBI" id="CHEBI:29033"/>
    </cofactor>
    <text evidence="1">Binds 1 Fe(2+) ion per subunit.</text>
</comment>
<comment type="subcellular location">
    <subcellularLocation>
        <location evidence="1">Cytoplasm</location>
    </subcellularLocation>
</comment>
<comment type="similarity">
    <text evidence="1">Belongs to the KAE1 / TsaD family.</text>
</comment>
<sequence length="336" mass="36104">MIVLGLETSCDETGLALYDSELGLRGQVLYSQIKLHAEYGGVVPELASRDHVRKLIPLMNQLLEQSGVKKQEIDAVAYTRGPGLMGALMTGALFGRTLAFSLNKPAIGVHHMEGHMLAPLLSSQPPEFPFVALLVSGGHTQLMAAHGIGQYELLGESIDDAAGEAFDKVAKMMNLPYPGGPNIAKLALSGDPLAFEFPRPMLHQGLDFSFSGLKTAVSVQLKKLNGENRDADIAASFQEAIVDTLVKKSVKALKQTGLKRLVIAGGVSANLRLREQLETSLAKIKAQVYYAEPALCTDNGAMIAFAGYQRLKAGQHDGLAVTTTPRWPMTELTIPE</sequence>
<protein>
    <recommendedName>
        <fullName evidence="1">tRNA N6-adenosine threonylcarbamoyltransferase</fullName>
        <ecNumber evidence="1">2.3.1.234</ecNumber>
    </recommendedName>
    <alternativeName>
        <fullName evidence="1">N6-L-threonylcarbamoyladenine synthase</fullName>
        <shortName evidence="1">t(6)A synthase</shortName>
    </alternativeName>
    <alternativeName>
        <fullName evidence="1">t(6)A37 threonylcarbamoyladenosine biosynthesis protein TsaD</fullName>
    </alternativeName>
    <alternativeName>
        <fullName evidence="1">tRNA threonylcarbamoyladenosine biosynthesis protein TsaD</fullName>
    </alternativeName>
</protein>
<accession>B2HUS7</accession>
<evidence type="ECO:0000255" key="1">
    <source>
        <dbReference type="HAMAP-Rule" id="MF_01445"/>
    </source>
</evidence>
<gene>
    <name evidence="1" type="primary">tsaD</name>
    <name type="synonym">gcp</name>
    <name type="ordered locus">ACICU_02445</name>
</gene>
<reference key="1">
    <citation type="journal article" date="2008" name="Antimicrob. Agents Chemother.">
        <title>Whole-genome pyrosequencing of an epidemic multidrug-resistant Acinetobacter baumannii strain belonging to the European clone II group.</title>
        <authorList>
            <person name="Iacono M."/>
            <person name="Villa L."/>
            <person name="Fortini D."/>
            <person name="Bordoni R."/>
            <person name="Imperi F."/>
            <person name="Bonnal R.J."/>
            <person name="Sicheritz-Ponten T."/>
            <person name="De Bellis G."/>
            <person name="Visca P."/>
            <person name="Cassone A."/>
            <person name="Carattoli A."/>
        </authorList>
    </citation>
    <scope>NUCLEOTIDE SEQUENCE [LARGE SCALE GENOMIC DNA]</scope>
    <source>
        <strain>ACICU</strain>
    </source>
</reference>
<keyword id="KW-0012">Acyltransferase</keyword>
<keyword id="KW-0963">Cytoplasm</keyword>
<keyword id="KW-0408">Iron</keyword>
<keyword id="KW-0479">Metal-binding</keyword>
<keyword id="KW-0808">Transferase</keyword>
<keyword id="KW-0819">tRNA processing</keyword>
<dbReference type="EC" id="2.3.1.234" evidence="1"/>
<dbReference type="EMBL" id="CP000863">
    <property type="protein sequence ID" value="ACC57757.1"/>
    <property type="molecule type" value="Genomic_DNA"/>
</dbReference>
<dbReference type="RefSeq" id="WP_000636263.1">
    <property type="nucleotide sequence ID" value="NZ_CP031380.1"/>
</dbReference>
<dbReference type="SMR" id="B2HUS7"/>
<dbReference type="GeneID" id="92894503"/>
<dbReference type="KEGG" id="abc:ACICU_02445"/>
<dbReference type="HOGENOM" id="CLU_023208_0_0_6"/>
<dbReference type="Proteomes" id="UP000008839">
    <property type="component" value="Chromosome"/>
</dbReference>
<dbReference type="GO" id="GO:0005737">
    <property type="term" value="C:cytoplasm"/>
    <property type="evidence" value="ECO:0007669"/>
    <property type="project" value="UniProtKB-SubCell"/>
</dbReference>
<dbReference type="GO" id="GO:0005506">
    <property type="term" value="F:iron ion binding"/>
    <property type="evidence" value="ECO:0007669"/>
    <property type="project" value="UniProtKB-UniRule"/>
</dbReference>
<dbReference type="GO" id="GO:0061711">
    <property type="term" value="F:N(6)-L-threonylcarbamoyladenine synthase activity"/>
    <property type="evidence" value="ECO:0007669"/>
    <property type="project" value="UniProtKB-EC"/>
</dbReference>
<dbReference type="GO" id="GO:0002949">
    <property type="term" value="P:tRNA threonylcarbamoyladenosine modification"/>
    <property type="evidence" value="ECO:0007669"/>
    <property type="project" value="UniProtKB-UniRule"/>
</dbReference>
<dbReference type="CDD" id="cd24133">
    <property type="entry name" value="ASKHA_NBD_TsaD_bac"/>
    <property type="match status" value="1"/>
</dbReference>
<dbReference type="FunFam" id="3.30.420.40:FF:000040">
    <property type="entry name" value="tRNA N6-adenosine threonylcarbamoyltransferase"/>
    <property type="match status" value="1"/>
</dbReference>
<dbReference type="Gene3D" id="3.30.420.40">
    <property type="match status" value="2"/>
</dbReference>
<dbReference type="HAMAP" id="MF_01445">
    <property type="entry name" value="TsaD"/>
    <property type="match status" value="1"/>
</dbReference>
<dbReference type="InterPro" id="IPR043129">
    <property type="entry name" value="ATPase_NBD"/>
</dbReference>
<dbReference type="InterPro" id="IPR000905">
    <property type="entry name" value="Gcp-like_dom"/>
</dbReference>
<dbReference type="InterPro" id="IPR017861">
    <property type="entry name" value="KAE1/TsaD"/>
</dbReference>
<dbReference type="InterPro" id="IPR017860">
    <property type="entry name" value="Peptidase_M22_CS"/>
</dbReference>
<dbReference type="InterPro" id="IPR022450">
    <property type="entry name" value="TsaD"/>
</dbReference>
<dbReference type="NCBIfam" id="TIGR00329">
    <property type="entry name" value="gcp_kae1"/>
    <property type="match status" value="1"/>
</dbReference>
<dbReference type="NCBIfam" id="TIGR03723">
    <property type="entry name" value="T6A_TsaD_YgjD"/>
    <property type="match status" value="1"/>
</dbReference>
<dbReference type="PANTHER" id="PTHR11735">
    <property type="entry name" value="TRNA N6-ADENOSINE THREONYLCARBAMOYLTRANSFERASE"/>
    <property type="match status" value="1"/>
</dbReference>
<dbReference type="PANTHER" id="PTHR11735:SF6">
    <property type="entry name" value="TRNA N6-ADENOSINE THREONYLCARBAMOYLTRANSFERASE, MITOCHONDRIAL"/>
    <property type="match status" value="1"/>
</dbReference>
<dbReference type="Pfam" id="PF00814">
    <property type="entry name" value="TsaD"/>
    <property type="match status" value="1"/>
</dbReference>
<dbReference type="PRINTS" id="PR00789">
    <property type="entry name" value="OSIALOPTASE"/>
</dbReference>
<dbReference type="SUPFAM" id="SSF53067">
    <property type="entry name" value="Actin-like ATPase domain"/>
    <property type="match status" value="2"/>
</dbReference>
<dbReference type="PROSITE" id="PS01016">
    <property type="entry name" value="GLYCOPROTEASE"/>
    <property type="match status" value="1"/>
</dbReference>
<feature type="chain" id="PRO_1000145940" description="tRNA N6-adenosine threonylcarbamoyltransferase">
    <location>
        <begin position="1"/>
        <end position="336"/>
    </location>
</feature>
<feature type="binding site" evidence="1">
    <location>
        <position position="111"/>
    </location>
    <ligand>
        <name>Fe cation</name>
        <dbReference type="ChEBI" id="CHEBI:24875"/>
    </ligand>
</feature>
<feature type="binding site" evidence="1">
    <location>
        <position position="115"/>
    </location>
    <ligand>
        <name>Fe cation</name>
        <dbReference type="ChEBI" id="CHEBI:24875"/>
    </ligand>
</feature>
<feature type="binding site" evidence="1">
    <location>
        <begin position="134"/>
        <end position="138"/>
    </location>
    <ligand>
        <name>substrate</name>
    </ligand>
</feature>
<feature type="binding site" evidence="1">
    <location>
        <position position="167"/>
    </location>
    <ligand>
        <name>substrate</name>
    </ligand>
</feature>
<feature type="binding site" evidence="1">
    <location>
        <position position="180"/>
    </location>
    <ligand>
        <name>substrate</name>
    </ligand>
</feature>
<feature type="binding site" evidence="1">
    <location>
        <position position="270"/>
    </location>
    <ligand>
        <name>substrate</name>
    </ligand>
</feature>
<feature type="binding site" evidence="1">
    <location>
        <position position="298"/>
    </location>
    <ligand>
        <name>Fe cation</name>
        <dbReference type="ChEBI" id="CHEBI:24875"/>
    </ligand>
</feature>
<proteinExistence type="inferred from homology"/>
<organism>
    <name type="scientific">Acinetobacter baumannii (strain ACICU)</name>
    <dbReference type="NCBI Taxonomy" id="405416"/>
    <lineage>
        <taxon>Bacteria</taxon>
        <taxon>Pseudomonadati</taxon>
        <taxon>Pseudomonadota</taxon>
        <taxon>Gammaproteobacteria</taxon>
        <taxon>Moraxellales</taxon>
        <taxon>Moraxellaceae</taxon>
        <taxon>Acinetobacter</taxon>
        <taxon>Acinetobacter calcoaceticus/baumannii complex</taxon>
    </lineage>
</organism>